<accession>A4SWW0</accession>
<proteinExistence type="inferred from homology"/>
<comment type="function">
    <text evidence="1">Catalyzes the reversible oxidation of malate to oxaloacetate.</text>
</comment>
<comment type="catalytic activity">
    <reaction evidence="1">
        <text>(S)-malate + NAD(+) = oxaloacetate + NADH + H(+)</text>
        <dbReference type="Rhea" id="RHEA:21432"/>
        <dbReference type="ChEBI" id="CHEBI:15378"/>
        <dbReference type="ChEBI" id="CHEBI:15589"/>
        <dbReference type="ChEBI" id="CHEBI:16452"/>
        <dbReference type="ChEBI" id="CHEBI:57540"/>
        <dbReference type="ChEBI" id="CHEBI:57945"/>
        <dbReference type="EC" id="1.1.1.37"/>
    </reaction>
</comment>
<comment type="similarity">
    <text evidence="1">Belongs to the LDH/MDH superfamily. MDH type 2 family.</text>
</comment>
<gene>
    <name evidence="1" type="primary">mdh</name>
    <name type="ordered locus">Pnuc_0756</name>
</gene>
<feature type="chain" id="PRO_1000087544" description="Malate dehydrogenase">
    <location>
        <begin position="1"/>
        <end position="329"/>
    </location>
</feature>
<feature type="active site" description="Proton acceptor" evidence="1">
    <location>
        <position position="190"/>
    </location>
</feature>
<feature type="binding site" evidence="1">
    <location>
        <begin position="12"/>
        <end position="18"/>
    </location>
    <ligand>
        <name>NAD(+)</name>
        <dbReference type="ChEBI" id="CHEBI:57540"/>
    </ligand>
</feature>
<feature type="binding site" evidence="1">
    <location>
        <position position="95"/>
    </location>
    <ligand>
        <name>substrate</name>
    </ligand>
</feature>
<feature type="binding site" evidence="1">
    <location>
        <position position="101"/>
    </location>
    <ligand>
        <name>substrate</name>
    </ligand>
</feature>
<feature type="binding site" evidence="1">
    <location>
        <position position="108"/>
    </location>
    <ligand>
        <name>NAD(+)</name>
        <dbReference type="ChEBI" id="CHEBI:57540"/>
    </ligand>
</feature>
<feature type="binding site" evidence="1">
    <location>
        <position position="115"/>
    </location>
    <ligand>
        <name>NAD(+)</name>
        <dbReference type="ChEBI" id="CHEBI:57540"/>
    </ligand>
</feature>
<feature type="binding site" evidence="1">
    <location>
        <begin position="132"/>
        <end position="134"/>
    </location>
    <ligand>
        <name>NAD(+)</name>
        <dbReference type="ChEBI" id="CHEBI:57540"/>
    </ligand>
</feature>
<feature type="binding site" evidence="1">
    <location>
        <position position="134"/>
    </location>
    <ligand>
        <name>substrate</name>
    </ligand>
</feature>
<feature type="binding site" evidence="1">
    <location>
        <position position="165"/>
    </location>
    <ligand>
        <name>substrate</name>
    </ligand>
</feature>
<name>MDH_POLAQ</name>
<organism>
    <name type="scientific">Polynucleobacter asymbioticus (strain DSM 18221 / CIP 109841 / QLW-P1DMWA-1)</name>
    <name type="common">Polynucleobacter necessarius subsp. asymbioticus</name>
    <dbReference type="NCBI Taxonomy" id="312153"/>
    <lineage>
        <taxon>Bacteria</taxon>
        <taxon>Pseudomonadati</taxon>
        <taxon>Pseudomonadota</taxon>
        <taxon>Betaproteobacteria</taxon>
        <taxon>Burkholderiales</taxon>
        <taxon>Burkholderiaceae</taxon>
        <taxon>Polynucleobacter</taxon>
    </lineage>
</organism>
<protein>
    <recommendedName>
        <fullName evidence="1">Malate dehydrogenase</fullName>
        <ecNumber evidence="1">1.1.1.37</ecNumber>
    </recommendedName>
</protein>
<dbReference type="EC" id="1.1.1.37" evidence="1"/>
<dbReference type="EMBL" id="CP000655">
    <property type="protein sequence ID" value="ABP33974.1"/>
    <property type="molecule type" value="Genomic_DNA"/>
</dbReference>
<dbReference type="RefSeq" id="WP_011902599.1">
    <property type="nucleotide sequence ID" value="NC_009379.1"/>
</dbReference>
<dbReference type="SMR" id="A4SWW0"/>
<dbReference type="GeneID" id="31481117"/>
<dbReference type="KEGG" id="pnu:Pnuc_0756"/>
<dbReference type="eggNOG" id="COG0039">
    <property type="taxonomic scope" value="Bacteria"/>
</dbReference>
<dbReference type="HOGENOM" id="CLU_040727_2_0_4"/>
<dbReference type="Proteomes" id="UP000000231">
    <property type="component" value="Chromosome"/>
</dbReference>
<dbReference type="GO" id="GO:0030060">
    <property type="term" value="F:L-malate dehydrogenase (NAD+) activity"/>
    <property type="evidence" value="ECO:0007669"/>
    <property type="project" value="UniProtKB-UniRule"/>
</dbReference>
<dbReference type="GO" id="GO:0006108">
    <property type="term" value="P:malate metabolic process"/>
    <property type="evidence" value="ECO:0007669"/>
    <property type="project" value="InterPro"/>
</dbReference>
<dbReference type="GO" id="GO:0006099">
    <property type="term" value="P:tricarboxylic acid cycle"/>
    <property type="evidence" value="ECO:0007669"/>
    <property type="project" value="UniProtKB-UniRule"/>
</dbReference>
<dbReference type="CDD" id="cd01338">
    <property type="entry name" value="MDH_chloroplast-like"/>
    <property type="match status" value="1"/>
</dbReference>
<dbReference type="FunFam" id="3.40.50.720:FF:000010">
    <property type="entry name" value="Malate dehydrogenase"/>
    <property type="match status" value="1"/>
</dbReference>
<dbReference type="FunFam" id="3.90.110.10:FF:000002">
    <property type="entry name" value="Malate dehydrogenase"/>
    <property type="match status" value="1"/>
</dbReference>
<dbReference type="Gene3D" id="3.90.110.10">
    <property type="entry name" value="Lactate dehydrogenase/glycoside hydrolase, family 4, C-terminal"/>
    <property type="match status" value="1"/>
</dbReference>
<dbReference type="Gene3D" id="3.40.50.720">
    <property type="entry name" value="NAD(P)-binding Rossmann-like Domain"/>
    <property type="match status" value="1"/>
</dbReference>
<dbReference type="HAMAP" id="MF_01517">
    <property type="entry name" value="Malate_dehydrog_2"/>
    <property type="match status" value="1"/>
</dbReference>
<dbReference type="InterPro" id="IPR001557">
    <property type="entry name" value="L-lactate/malate_DH"/>
</dbReference>
<dbReference type="InterPro" id="IPR022383">
    <property type="entry name" value="Lactate/malate_DH_C"/>
</dbReference>
<dbReference type="InterPro" id="IPR001236">
    <property type="entry name" value="Lactate/malate_DH_N"/>
</dbReference>
<dbReference type="InterPro" id="IPR015955">
    <property type="entry name" value="Lactate_DH/Glyco_Ohase_4_C"/>
</dbReference>
<dbReference type="InterPro" id="IPR010945">
    <property type="entry name" value="Malate_DH_type2"/>
</dbReference>
<dbReference type="InterPro" id="IPR036291">
    <property type="entry name" value="NAD(P)-bd_dom_sf"/>
</dbReference>
<dbReference type="NCBIfam" id="TIGR01759">
    <property type="entry name" value="MalateDH-SF1"/>
    <property type="match status" value="1"/>
</dbReference>
<dbReference type="NCBIfam" id="NF003916">
    <property type="entry name" value="PRK05442.1"/>
    <property type="match status" value="1"/>
</dbReference>
<dbReference type="PANTHER" id="PTHR23382">
    <property type="entry name" value="MALATE DEHYDROGENASE"/>
    <property type="match status" value="1"/>
</dbReference>
<dbReference type="Pfam" id="PF02866">
    <property type="entry name" value="Ldh_1_C"/>
    <property type="match status" value="1"/>
</dbReference>
<dbReference type="Pfam" id="PF00056">
    <property type="entry name" value="Ldh_1_N"/>
    <property type="match status" value="1"/>
</dbReference>
<dbReference type="PIRSF" id="PIRSF000102">
    <property type="entry name" value="Lac_mal_DH"/>
    <property type="match status" value="1"/>
</dbReference>
<dbReference type="SUPFAM" id="SSF56327">
    <property type="entry name" value="LDH C-terminal domain-like"/>
    <property type="match status" value="1"/>
</dbReference>
<dbReference type="SUPFAM" id="SSF51735">
    <property type="entry name" value="NAD(P)-binding Rossmann-fold domains"/>
    <property type="match status" value="1"/>
</dbReference>
<reference key="1">
    <citation type="journal article" date="2012" name="Stand. Genomic Sci.">
        <title>Complete genome sequence of Polynucleobacter necessarius subsp. asymbioticus type strain (QLW-P1DMWA-1(T)).</title>
        <authorList>
            <person name="Meincke L."/>
            <person name="Copeland A."/>
            <person name="Lapidus A."/>
            <person name="Lucas S."/>
            <person name="Berry K.W."/>
            <person name="Del Rio T.G."/>
            <person name="Hammon N."/>
            <person name="Dalin E."/>
            <person name="Tice H."/>
            <person name="Pitluck S."/>
            <person name="Richardson P."/>
            <person name="Bruce D."/>
            <person name="Goodwin L."/>
            <person name="Han C."/>
            <person name="Tapia R."/>
            <person name="Detter J.C."/>
            <person name="Schmutz J."/>
            <person name="Brettin T."/>
            <person name="Larimer F."/>
            <person name="Land M."/>
            <person name="Hauser L."/>
            <person name="Kyrpides N.C."/>
            <person name="Ivanova N."/>
            <person name="Goker M."/>
            <person name="Woyke T."/>
            <person name="Wu Q.L."/>
            <person name="Pockl M."/>
            <person name="Hahn M.W."/>
            <person name="Klenk H.P."/>
        </authorList>
    </citation>
    <scope>NUCLEOTIDE SEQUENCE [LARGE SCALE GENOMIC DNA]</scope>
    <source>
        <strain>DSM 18221 / CIP 109841 / QLW-P1DMWA-1</strain>
    </source>
</reference>
<evidence type="ECO:0000255" key="1">
    <source>
        <dbReference type="HAMAP-Rule" id="MF_01517"/>
    </source>
</evidence>
<keyword id="KW-0520">NAD</keyword>
<keyword id="KW-0560">Oxidoreductase</keyword>
<keyword id="KW-1185">Reference proteome</keyword>
<keyword id="KW-0816">Tricarboxylic acid cycle</keyword>
<sequence length="329" mass="35502">MAKAPMRVAVTGAAGQIGYSLLFRIANGDLLGKDQPVILQLLEIPDEKAQKALTGVMMELEDCAFPLLAGMTAHSDPMTAFKDIDVALLVGARPRGPGMERKDLLSANAQIFTAQGKALNAVAKKTVKVLVVGNPANTNAYIAMKSAPDIPAKNFTAMLRLDHNRALSQLANKLNKPVADIEKLVVWGNHSPTMYPDYRFATIDGKSVKDSINDAAWNKDVFIPTVGKRGAAIIEARGLSSAASAANAAIDHIHDWVLGTNGKWVTMGIPSKGEYGIPAEVIYGFPVTCENGEYKMIEGLEIDEFSRERMTHTLNELLEEQAGVKHLLP</sequence>